<gene>
    <name evidence="1" type="primary">atpC</name>
    <name type="ordered locus">Mfla_2743</name>
</gene>
<name>ATPE_METFK</name>
<keyword id="KW-0066">ATP synthesis</keyword>
<keyword id="KW-0997">Cell inner membrane</keyword>
<keyword id="KW-1003">Cell membrane</keyword>
<keyword id="KW-0139">CF(1)</keyword>
<keyword id="KW-0375">Hydrogen ion transport</keyword>
<keyword id="KW-0406">Ion transport</keyword>
<keyword id="KW-0472">Membrane</keyword>
<keyword id="KW-1185">Reference proteome</keyword>
<keyword id="KW-0813">Transport</keyword>
<evidence type="ECO:0000255" key="1">
    <source>
        <dbReference type="HAMAP-Rule" id="MF_00530"/>
    </source>
</evidence>
<protein>
    <recommendedName>
        <fullName evidence="1">ATP synthase epsilon chain</fullName>
    </recommendedName>
    <alternativeName>
        <fullName evidence="1">ATP synthase F1 sector epsilon subunit</fullName>
    </alternativeName>
    <alternativeName>
        <fullName evidence="1">F-ATPase epsilon subunit</fullName>
    </alternativeName>
</protein>
<sequence>MASTIHLDVVSAEESIFSGEAEFVAAPAKLGEVGIYPNHAPLITTIKPGVLRVKVANGGEEQAIYISGGLLEVQPGVITVLADTAIRGHDLDEVKAIEAKRAAEEALRNNASGVDYARAQAELSEALAQLQTIEQLRKTTH</sequence>
<dbReference type="EMBL" id="CP000284">
    <property type="protein sequence ID" value="ABE51006.1"/>
    <property type="molecule type" value="Genomic_DNA"/>
</dbReference>
<dbReference type="RefSeq" id="WP_011480959.1">
    <property type="nucleotide sequence ID" value="NC_007947.1"/>
</dbReference>
<dbReference type="SMR" id="Q1GXN1"/>
<dbReference type="STRING" id="265072.Mfla_2743"/>
<dbReference type="KEGG" id="mfa:Mfla_2743"/>
<dbReference type="eggNOG" id="COG0355">
    <property type="taxonomic scope" value="Bacteria"/>
</dbReference>
<dbReference type="HOGENOM" id="CLU_084338_2_0_4"/>
<dbReference type="OrthoDB" id="9791445at2"/>
<dbReference type="Proteomes" id="UP000002440">
    <property type="component" value="Chromosome"/>
</dbReference>
<dbReference type="GO" id="GO:0005886">
    <property type="term" value="C:plasma membrane"/>
    <property type="evidence" value="ECO:0007669"/>
    <property type="project" value="UniProtKB-SubCell"/>
</dbReference>
<dbReference type="GO" id="GO:0045259">
    <property type="term" value="C:proton-transporting ATP synthase complex"/>
    <property type="evidence" value="ECO:0007669"/>
    <property type="project" value="UniProtKB-KW"/>
</dbReference>
<dbReference type="GO" id="GO:0005524">
    <property type="term" value="F:ATP binding"/>
    <property type="evidence" value="ECO:0007669"/>
    <property type="project" value="UniProtKB-UniRule"/>
</dbReference>
<dbReference type="GO" id="GO:0046933">
    <property type="term" value="F:proton-transporting ATP synthase activity, rotational mechanism"/>
    <property type="evidence" value="ECO:0007669"/>
    <property type="project" value="UniProtKB-UniRule"/>
</dbReference>
<dbReference type="CDD" id="cd12152">
    <property type="entry name" value="F1-ATPase_delta"/>
    <property type="match status" value="1"/>
</dbReference>
<dbReference type="FunFam" id="1.20.5.440:FF:000001">
    <property type="entry name" value="ATP synthase epsilon chain"/>
    <property type="match status" value="1"/>
</dbReference>
<dbReference type="FunFam" id="2.60.15.10:FF:000001">
    <property type="entry name" value="ATP synthase epsilon chain"/>
    <property type="match status" value="1"/>
</dbReference>
<dbReference type="Gene3D" id="1.20.5.440">
    <property type="entry name" value="ATP synthase delta/epsilon subunit, C-terminal domain"/>
    <property type="match status" value="1"/>
</dbReference>
<dbReference type="Gene3D" id="2.60.15.10">
    <property type="entry name" value="F0F1 ATP synthase delta/epsilon subunit, N-terminal"/>
    <property type="match status" value="1"/>
</dbReference>
<dbReference type="HAMAP" id="MF_00530">
    <property type="entry name" value="ATP_synth_epsil_bac"/>
    <property type="match status" value="1"/>
</dbReference>
<dbReference type="InterPro" id="IPR036794">
    <property type="entry name" value="ATP_F1_dsu/esu_C_sf"/>
</dbReference>
<dbReference type="InterPro" id="IPR001469">
    <property type="entry name" value="ATP_synth_F1_dsu/esu"/>
</dbReference>
<dbReference type="InterPro" id="IPR020546">
    <property type="entry name" value="ATP_synth_F1_dsu/esu_N"/>
</dbReference>
<dbReference type="InterPro" id="IPR020547">
    <property type="entry name" value="ATP_synth_F1_esu_C"/>
</dbReference>
<dbReference type="InterPro" id="IPR036771">
    <property type="entry name" value="ATPsynth_dsu/esu_N"/>
</dbReference>
<dbReference type="NCBIfam" id="TIGR01216">
    <property type="entry name" value="ATP_synt_epsi"/>
    <property type="match status" value="1"/>
</dbReference>
<dbReference type="NCBIfam" id="NF001847">
    <property type="entry name" value="PRK00571.1-4"/>
    <property type="match status" value="1"/>
</dbReference>
<dbReference type="PANTHER" id="PTHR13822">
    <property type="entry name" value="ATP SYNTHASE DELTA/EPSILON CHAIN"/>
    <property type="match status" value="1"/>
</dbReference>
<dbReference type="PANTHER" id="PTHR13822:SF10">
    <property type="entry name" value="ATP SYNTHASE EPSILON CHAIN, CHLOROPLASTIC"/>
    <property type="match status" value="1"/>
</dbReference>
<dbReference type="Pfam" id="PF00401">
    <property type="entry name" value="ATP-synt_DE"/>
    <property type="match status" value="1"/>
</dbReference>
<dbReference type="Pfam" id="PF02823">
    <property type="entry name" value="ATP-synt_DE_N"/>
    <property type="match status" value="1"/>
</dbReference>
<dbReference type="SUPFAM" id="SSF46604">
    <property type="entry name" value="Epsilon subunit of F1F0-ATP synthase C-terminal domain"/>
    <property type="match status" value="1"/>
</dbReference>
<dbReference type="SUPFAM" id="SSF51344">
    <property type="entry name" value="Epsilon subunit of F1F0-ATP synthase N-terminal domain"/>
    <property type="match status" value="1"/>
</dbReference>
<feature type="chain" id="PRO_0000265838" description="ATP synthase epsilon chain">
    <location>
        <begin position="1"/>
        <end position="141"/>
    </location>
</feature>
<organism>
    <name type="scientific">Methylobacillus flagellatus (strain ATCC 51484 / DSM 6875 / VKM B-1610 / KT)</name>
    <dbReference type="NCBI Taxonomy" id="265072"/>
    <lineage>
        <taxon>Bacteria</taxon>
        <taxon>Pseudomonadati</taxon>
        <taxon>Pseudomonadota</taxon>
        <taxon>Betaproteobacteria</taxon>
        <taxon>Nitrosomonadales</taxon>
        <taxon>Methylophilaceae</taxon>
        <taxon>Methylobacillus</taxon>
    </lineage>
</organism>
<proteinExistence type="inferred from homology"/>
<comment type="function">
    <text evidence="1">Produces ATP from ADP in the presence of a proton gradient across the membrane.</text>
</comment>
<comment type="subunit">
    <text>F-type ATPases have 2 components, CF(1) - the catalytic core - and CF(0) - the membrane proton channel. CF(1) has five subunits: alpha(3), beta(3), gamma(1), delta(1), epsilon(1). CF(0) has three main subunits: a, b and c.</text>
</comment>
<comment type="subcellular location">
    <subcellularLocation>
        <location evidence="1">Cell inner membrane</location>
        <topology evidence="1">Peripheral membrane protein</topology>
    </subcellularLocation>
</comment>
<comment type="similarity">
    <text evidence="1">Belongs to the ATPase epsilon chain family.</text>
</comment>
<reference key="1">
    <citation type="submission" date="2006-03" db="EMBL/GenBank/DDBJ databases">
        <title>Complete sequence of Methylobacillus flagellatus KT.</title>
        <authorList>
            <consortium name="US DOE Joint Genome Institute"/>
            <person name="Copeland A."/>
            <person name="Lucas S."/>
            <person name="Lapidus A."/>
            <person name="Barry K."/>
            <person name="Detter J.C."/>
            <person name="Glavina del Rio T."/>
            <person name="Hammon N."/>
            <person name="Israni S."/>
            <person name="Dalin E."/>
            <person name="Tice H."/>
            <person name="Pitluck S."/>
            <person name="Brettin T."/>
            <person name="Bruce D."/>
            <person name="Han C."/>
            <person name="Tapia R."/>
            <person name="Saunders E."/>
            <person name="Gilna P."/>
            <person name="Schmutz J."/>
            <person name="Larimer F."/>
            <person name="Land M."/>
            <person name="Kyrpides N."/>
            <person name="Anderson I."/>
            <person name="Richardson P."/>
        </authorList>
    </citation>
    <scope>NUCLEOTIDE SEQUENCE [LARGE SCALE GENOMIC DNA]</scope>
    <source>
        <strain>ATCC 51484 / DSM 6875 / VKM B-1610 / KT</strain>
    </source>
</reference>
<accession>Q1GXN1</accession>